<evidence type="ECO:0000250" key="1">
    <source>
        <dbReference type="UniProtKB" id="O75844"/>
    </source>
</evidence>
<evidence type="ECO:0000250" key="2">
    <source>
        <dbReference type="UniProtKB" id="P36163"/>
    </source>
</evidence>
<evidence type="ECO:0000255" key="3"/>
<evidence type="ECO:0000255" key="4">
    <source>
        <dbReference type="PROSITE-ProRule" id="PRU10095"/>
    </source>
</evidence>
<evidence type="ECO:0000305" key="5"/>
<evidence type="ECO:0000312" key="6">
    <source>
        <dbReference type="PomBase" id="SPAP14E8.04"/>
    </source>
</evidence>
<organism>
    <name type="scientific">Schizosaccharomyces pombe (strain 972 / ATCC 24843)</name>
    <name type="common">Fission yeast</name>
    <dbReference type="NCBI Taxonomy" id="284812"/>
    <lineage>
        <taxon>Eukaryota</taxon>
        <taxon>Fungi</taxon>
        <taxon>Dikarya</taxon>
        <taxon>Ascomycota</taxon>
        <taxon>Taphrinomycotina</taxon>
        <taxon>Schizosaccharomycetes</taxon>
        <taxon>Schizosaccharomycetales</taxon>
        <taxon>Schizosaccharomycetaceae</taxon>
        <taxon>Schizosaccharomyces</taxon>
    </lineage>
</organism>
<name>OMA1_SCHPO</name>
<comment type="function">
    <text evidence="2">Protease that is part of the quality control system in the inner membrane of mitochondria. Cleaves and thereby promotes the turnover of mistranslated or misfolded membrane protein.</text>
</comment>
<comment type="cofactor">
    <cofactor evidence="1">
        <name>Zn(2+)</name>
        <dbReference type="ChEBI" id="CHEBI:29105"/>
    </cofactor>
    <text evidence="1">Binds 1 zinc ion per subunit.</text>
</comment>
<comment type="activity regulation">
    <text evidence="2">Protease activity is induced in response to various mitochondrial stress.</text>
</comment>
<comment type="subcellular location">
    <subcellularLocation>
        <location evidence="2">Mitochondrion inner membrane</location>
        <topology evidence="5">Single-pass membrane protein</topology>
    </subcellularLocation>
</comment>
<comment type="similarity">
    <text evidence="5">Belongs to the peptidase M48 family.</text>
</comment>
<keyword id="KW-1015">Disulfide bond</keyword>
<keyword id="KW-0378">Hydrolase</keyword>
<keyword id="KW-0472">Membrane</keyword>
<keyword id="KW-0479">Metal-binding</keyword>
<keyword id="KW-0482">Metalloprotease</keyword>
<keyword id="KW-0496">Mitochondrion</keyword>
<keyword id="KW-0999">Mitochondrion inner membrane</keyword>
<keyword id="KW-0645">Protease</keyword>
<keyword id="KW-1185">Reference proteome</keyword>
<keyword id="KW-0812">Transmembrane</keyword>
<keyword id="KW-1133">Transmembrane helix</keyword>
<keyword id="KW-0862">Zinc</keyword>
<gene>
    <name evidence="6" type="primary">oma1</name>
    <name type="ORF">SPAP14E8.04</name>
</gene>
<accession>Q9P7G4</accession>
<sequence>MFLNKYISNYSRTRAVSCAPVLSYKKCSYRNFNGLLQARFQSNNLSWSNRNRVVYKSFQPNPRDKRFQWIFGALIAGGGVYYFTHLEYVPISNRRRFNDVSLDFEKRMAQDAYKEVMSEYGDRMLPSYHPTTLYVSRVLKRIIAVSGMSDLKWELHVIRDPTPNAFVLPGGKVFVFEGILPMCKGEDGLAAVLAHETAHQVARHSAEKIAFTRAVSCIVFLAAASLDLSGQLSHFLLNFGLLLPFSRKMETEADYIGLMLMSQACFDPNAAKTLWERMDAAEGQMGKALAFASTHPSSKKRIRKIEEWLPEAQVKRETSDCYHETWPMLQSFKEVHW</sequence>
<dbReference type="EC" id="3.4.24.-" evidence="2"/>
<dbReference type="EMBL" id="CU329670">
    <property type="protein sequence ID" value="CAB77005.1"/>
    <property type="molecule type" value="Genomic_DNA"/>
</dbReference>
<dbReference type="RefSeq" id="NP_593540.1">
    <property type="nucleotide sequence ID" value="NM_001018974.2"/>
</dbReference>
<dbReference type="SMR" id="Q9P7G4"/>
<dbReference type="BioGRID" id="278405">
    <property type="interactions" value="2"/>
</dbReference>
<dbReference type="FunCoup" id="Q9P7G4">
    <property type="interactions" value="124"/>
</dbReference>
<dbReference type="STRING" id="284812.Q9P7G4"/>
<dbReference type="iPTMnet" id="Q9P7G4"/>
<dbReference type="PaxDb" id="4896-SPAP14E8.04.1"/>
<dbReference type="EnsemblFungi" id="SPAP14E8.04.1">
    <property type="protein sequence ID" value="SPAP14E8.04.1:pep"/>
    <property type="gene ID" value="SPAP14E8.04"/>
</dbReference>
<dbReference type="GeneID" id="2541915"/>
<dbReference type="KEGG" id="spo:2541915"/>
<dbReference type="PomBase" id="SPAP14E8.04">
    <property type="gene designation" value="oma1"/>
</dbReference>
<dbReference type="VEuPathDB" id="FungiDB:SPAP14E8.04"/>
<dbReference type="eggNOG" id="KOG2661">
    <property type="taxonomic scope" value="Eukaryota"/>
</dbReference>
<dbReference type="HOGENOM" id="CLU_029002_1_0_1"/>
<dbReference type="InParanoid" id="Q9P7G4"/>
<dbReference type="OMA" id="RFNCYSE"/>
<dbReference type="PhylomeDB" id="Q9P7G4"/>
<dbReference type="Reactome" id="R-SPO-169911">
    <property type="pathway name" value="Regulation of Apoptosis"/>
</dbReference>
<dbReference type="Reactome" id="R-SPO-9840373">
    <property type="pathway name" value="Cellular response to mitochondrial stress"/>
</dbReference>
<dbReference type="PRO" id="PR:Q9P7G4"/>
<dbReference type="Proteomes" id="UP000002485">
    <property type="component" value="Chromosome I"/>
</dbReference>
<dbReference type="GO" id="GO:0005743">
    <property type="term" value="C:mitochondrial inner membrane"/>
    <property type="evidence" value="ECO:0000318"/>
    <property type="project" value="GO_Central"/>
</dbReference>
<dbReference type="GO" id="GO:0005739">
    <property type="term" value="C:mitochondrion"/>
    <property type="evidence" value="ECO:0007005"/>
    <property type="project" value="PomBase"/>
</dbReference>
<dbReference type="GO" id="GO:0046872">
    <property type="term" value="F:metal ion binding"/>
    <property type="evidence" value="ECO:0007669"/>
    <property type="project" value="UniProtKB-KW"/>
</dbReference>
<dbReference type="GO" id="GO:0004222">
    <property type="term" value="F:metalloendopeptidase activity"/>
    <property type="evidence" value="ECO:0000318"/>
    <property type="project" value="GO_Central"/>
</dbReference>
<dbReference type="GO" id="GO:0034982">
    <property type="term" value="P:mitochondrial protein processing"/>
    <property type="evidence" value="ECO:0000318"/>
    <property type="project" value="GO_Central"/>
</dbReference>
<dbReference type="GO" id="GO:0006515">
    <property type="term" value="P:protein quality control for misfolded or incompletely synthesized proteins"/>
    <property type="evidence" value="ECO:0000318"/>
    <property type="project" value="GO_Central"/>
</dbReference>
<dbReference type="CDD" id="cd07331">
    <property type="entry name" value="M48C_Oma1_like"/>
    <property type="match status" value="1"/>
</dbReference>
<dbReference type="Gene3D" id="3.30.2010.10">
    <property type="entry name" value="Metalloproteases ('zincins'), catalytic domain"/>
    <property type="match status" value="1"/>
</dbReference>
<dbReference type="InterPro" id="IPR051156">
    <property type="entry name" value="Mito/Outer_Membr_Metalloprot"/>
</dbReference>
<dbReference type="InterPro" id="IPR001915">
    <property type="entry name" value="Peptidase_M48"/>
</dbReference>
<dbReference type="PANTHER" id="PTHR22726">
    <property type="entry name" value="METALLOENDOPEPTIDASE OMA1"/>
    <property type="match status" value="1"/>
</dbReference>
<dbReference type="PANTHER" id="PTHR22726:SF1">
    <property type="entry name" value="METALLOENDOPEPTIDASE OMA1, MITOCHONDRIAL"/>
    <property type="match status" value="1"/>
</dbReference>
<dbReference type="Pfam" id="PF01435">
    <property type="entry name" value="Peptidase_M48"/>
    <property type="match status" value="1"/>
</dbReference>
<feature type="chain" id="PRO_0000302811" description="Mitochondrial metalloendopeptidase OMA1" evidence="3">
    <location>
        <begin position="1"/>
        <end position="337"/>
    </location>
</feature>
<feature type="topological domain" description="Mitochondrial matrix" evidence="5">
    <location>
        <begin position="1"/>
        <end position="68"/>
    </location>
</feature>
<feature type="transmembrane region" description="Helical" evidence="3">
    <location>
        <begin position="69"/>
        <end position="89"/>
    </location>
</feature>
<feature type="topological domain" description="Mitochondrial intermembrane" evidence="5">
    <location>
        <begin position="90"/>
        <end position="337"/>
    </location>
</feature>
<feature type="active site" evidence="4">
    <location>
        <position position="196"/>
    </location>
</feature>
<feature type="binding site" evidence="4">
    <location>
        <position position="195"/>
    </location>
    <ligand>
        <name>Zn(2+)</name>
        <dbReference type="ChEBI" id="CHEBI:29105"/>
        <note>catalytic</note>
    </ligand>
</feature>
<feature type="binding site" evidence="4">
    <location>
        <position position="199"/>
    </location>
    <ligand>
        <name>Zn(2+)</name>
        <dbReference type="ChEBI" id="CHEBI:29105"/>
        <note>catalytic</note>
    </ligand>
</feature>
<feature type="binding site" evidence="4">
    <location>
        <position position="250"/>
    </location>
    <ligand>
        <name>Zn(2+)</name>
        <dbReference type="ChEBI" id="CHEBI:29105"/>
        <note>catalytic</note>
    </ligand>
</feature>
<feature type="disulfide bond" evidence="2">
    <location>
        <begin position="265"/>
        <end position="321"/>
    </location>
</feature>
<reference key="1">
    <citation type="journal article" date="2002" name="Nature">
        <title>The genome sequence of Schizosaccharomyces pombe.</title>
        <authorList>
            <person name="Wood V."/>
            <person name="Gwilliam R."/>
            <person name="Rajandream M.A."/>
            <person name="Lyne M.H."/>
            <person name="Lyne R."/>
            <person name="Stewart A."/>
            <person name="Sgouros J.G."/>
            <person name="Peat N."/>
            <person name="Hayles J."/>
            <person name="Baker S.G."/>
            <person name="Basham D."/>
            <person name="Bowman S."/>
            <person name="Brooks K."/>
            <person name="Brown D."/>
            <person name="Brown S."/>
            <person name="Chillingworth T."/>
            <person name="Churcher C.M."/>
            <person name="Collins M."/>
            <person name="Connor R."/>
            <person name="Cronin A."/>
            <person name="Davis P."/>
            <person name="Feltwell T."/>
            <person name="Fraser A."/>
            <person name="Gentles S."/>
            <person name="Goble A."/>
            <person name="Hamlin N."/>
            <person name="Harris D.E."/>
            <person name="Hidalgo J."/>
            <person name="Hodgson G."/>
            <person name="Holroyd S."/>
            <person name="Hornsby T."/>
            <person name="Howarth S."/>
            <person name="Huckle E.J."/>
            <person name="Hunt S."/>
            <person name="Jagels K."/>
            <person name="James K.D."/>
            <person name="Jones L."/>
            <person name="Jones M."/>
            <person name="Leather S."/>
            <person name="McDonald S."/>
            <person name="McLean J."/>
            <person name="Mooney P."/>
            <person name="Moule S."/>
            <person name="Mungall K.L."/>
            <person name="Murphy L.D."/>
            <person name="Niblett D."/>
            <person name="Odell C."/>
            <person name="Oliver K."/>
            <person name="O'Neil S."/>
            <person name="Pearson D."/>
            <person name="Quail M.A."/>
            <person name="Rabbinowitsch E."/>
            <person name="Rutherford K.M."/>
            <person name="Rutter S."/>
            <person name="Saunders D."/>
            <person name="Seeger K."/>
            <person name="Sharp S."/>
            <person name="Skelton J."/>
            <person name="Simmonds M.N."/>
            <person name="Squares R."/>
            <person name="Squares S."/>
            <person name="Stevens K."/>
            <person name="Taylor K."/>
            <person name="Taylor R.G."/>
            <person name="Tivey A."/>
            <person name="Walsh S.V."/>
            <person name="Warren T."/>
            <person name="Whitehead S."/>
            <person name="Woodward J.R."/>
            <person name="Volckaert G."/>
            <person name="Aert R."/>
            <person name="Robben J."/>
            <person name="Grymonprez B."/>
            <person name="Weltjens I."/>
            <person name="Vanstreels E."/>
            <person name="Rieger M."/>
            <person name="Schaefer M."/>
            <person name="Mueller-Auer S."/>
            <person name="Gabel C."/>
            <person name="Fuchs M."/>
            <person name="Duesterhoeft A."/>
            <person name="Fritzc C."/>
            <person name="Holzer E."/>
            <person name="Moestl D."/>
            <person name="Hilbert H."/>
            <person name="Borzym K."/>
            <person name="Langer I."/>
            <person name="Beck A."/>
            <person name="Lehrach H."/>
            <person name="Reinhardt R."/>
            <person name="Pohl T.M."/>
            <person name="Eger P."/>
            <person name="Zimmermann W."/>
            <person name="Wedler H."/>
            <person name="Wambutt R."/>
            <person name="Purnelle B."/>
            <person name="Goffeau A."/>
            <person name="Cadieu E."/>
            <person name="Dreano S."/>
            <person name="Gloux S."/>
            <person name="Lelaure V."/>
            <person name="Mottier S."/>
            <person name="Galibert F."/>
            <person name="Aves S.J."/>
            <person name="Xiang Z."/>
            <person name="Hunt C."/>
            <person name="Moore K."/>
            <person name="Hurst S.M."/>
            <person name="Lucas M."/>
            <person name="Rochet M."/>
            <person name="Gaillardin C."/>
            <person name="Tallada V.A."/>
            <person name="Garzon A."/>
            <person name="Thode G."/>
            <person name="Daga R.R."/>
            <person name="Cruzado L."/>
            <person name="Jimenez J."/>
            <person name="Sanchez M."/>
            <person name="del Rey F."/>
            <person name="Benito J."/>
            <person name="Dominguez A."/>
            <person name="Revuelta J.L."/>
            <person name="Moreno S."/>
            <person name="Armstrong J."/>
            <person name="Forsburg S.L."/>
            <person name="Cerutti L."/>
            <person name="Lowe T."/>
            <person name="McCombie W.R."/>
            <person name="Paulsen I."/>
            <person name="Potashkin J."/>
            <person name="Shpakovski G.V."/>
            <person name="Ussery D."/>
            <person name="Barrell B.G."/>
            <person name="Nurse P."/>
        </authorList>
    </citation>
    <scope>NUCLEOTIDE SEQUENCE [LARGE SCALE GENOMIC DNA]</scope>
    <source>
        <strain>972 / ATCC 24843</strain>
    </source>
</reference>
<proteinExistence type="inferred from homology"/>
<protein>
    <recommendedName>
        <fullName evidence="5">Mitochondrial metalloendopeptidase OMA1</fullName>
        <ecNumber evidence="2">3.4.24.-</ecNumber>
    </recommendedName>
</protein>